<reference key="1">
    <citation type="journal article" date="1998" name="J. Bacteriol.">
        <title>The apbE gene encodes a lipoprotein involved in thiamine synthesis in Salmonella typhimurium.</title>
        <authorList>
            <person name="Beck B.J."/>
            <person name="Downs D.M."/>
        </authorList>
    </citation>
    <scope>NUCLEOTIDE SEQUENCE [GENOMIC DNA]</scope>
    <scope>DISRUPTION PHENOTYPE</scope>
    <scope>SUBCELLULAR LOCATION</scope>
    <source>
        <strain>LT2</strain>
    </source>
</reference>
<reference key="2">
    <citation type="submission" date="1997-02" db="EMBL/GenBank/DDBJ databases">
        <authorList>
            <person name="Beck G."/>
            <person name="Blat Y."/>
            <person name="Eisenbach M."/>
        </authorList>
    </citation>
    <scope>NUCLEOTIDE SEQUENCE [GENOMIC DNA]</scope>
    <source>
        <strain>ATCC 29595 / ST1</strain>
    </source>
</reference>
<reference key="3">
    <citation type="journal article" date="2001" name="Nature">
        <title>Complete genome sequence of Salmonella enterica serovar Typhimurium LT2.</title>
        <authorList>
            <person name="McClelland M."/>
            <person name="Sanderson K.E."/>
            <person name="Spieth J."/>
            <person name="Clifton S.W."/>
            <person name="Latreille P."/>
            <person name="Courtney L."/>
            <person name="Porwollik S."/>
            <person name="Ali J."/>
            <person name="Dante M."/>
            <person name="Du F."/>
            <person name="Hou S."/>
            <person name="Layman D."/>
            <person name="Leonard S."/>
            <person name="Nguyen C."/>
            <person name="Scott K."/>
            <person name="Holmes A."/>
            <person name="Grewal N."/>
            <person name="Mulvaney E."/>
            <person name="Ryan E."/>
            <person name="Sun H."/>
            <person name="Florea L."/>
            <person name="Miller W."/>
            <person name="Stoneking T."/>
            <person name="Nhan M."/>
            <person name="Waterston R."/>
            <person name="Wilson R.K."/>
        </authorList>
    </citation>
    <scope>NUCLEOTIDE SEQUENCE [LARGE SCALE GENOMIC DNA]</scope>
    <source>
        <strain>LT2 / SGSC1412 / ATCC 700720</strain>
    </source>
</reference>
<reference key="4">
    <citation type="journal article" date="1991" name="J. Bacteriol.">
        <title>Cloning and characterization of the Salmonella typhimurium ada gene, which encodes O6-methylguanine-DNA methyltransferase.</title>
        <authorList>
            <person name="Hakura A."/>
            <person name="Morimoto K."/>
            <person name="Sofuni T."/>
            <person name="Nohmi T."/>
        </authorList>
    </citation>
    <scope>NUCLEOTIDE SEQUENCE [GENOMIC DNA] OF 337-350</scope>
</reference>
<reference key="5">
    <citation type="journal article" date="1999" name="J. Bacteriol.">
        <title>A periplasmic location is essential for the role of the ApbE lipoprotein in thiamine synthesis in Salmonella typhimurium.</title>
        <authorList>
            <person name="Beck B.J."/>
            <person name="Downs D.M."/>
        </authorList>
    </citation>
    <scope>SUBCELLULAR LOCATION</scope>
    <source>
        <strain>LT2</strain>
    </source>
</reference>
<reference key="6">
    <citation type="journal article" date="2003" name="J. Bacteriol.">
        <title>Lack of the ApbC or ApbE protein results in a defect in Fe-S cluster metabolism in Salmonella enterica serovar Typhimurium.</title>
        <authorList>
            <person name="Skovran E."/>
            <person name="Downs D.M."/>
        </authorList>
    </citation>
    <scope>DISRUPTION PHENOTYPE</scope>
    <source>
        <strain>LT2</strain>
    </source>
</reference>
<reference key="7">
    <citation type="journal article" date="2011" name="J. Bacteriol.">
        <title>FAD binding by ApbE protein from Salmonella enterica: a new class of FAD-binding proteins.</title>
        <authorList>
            <person name="Boyd J.M."/>
            <person name="Endrizzi J.A."/>
            <person name="Hamilton T.L."/>
            <person name="Christopherson M.R."/>
            <person name="Mulder D.W."/>
            <person name="Downs D.M."/>
            <person name="Peters J.W."/>
        </authorList>
    </citation>
    <scope>X-RAY CRYSTALLOGRAPHY (2.75 ANGSTROMS) OF 21-350 IN COMPLEX WITH FAD</scope>
    <scope>SUBUNIT</scope>
    <scope>MUTAGENESIS OF TYR-78</scope>
    <source>
        <strain>LT2</strain>
    </source>
</reference>
<accession>P41780</accession>
<accession>O06948</accession>
<evidence type="ECO:0000250" key="1">
    <source>
        <dbReference type="UniProtKB" id="A5F5Y3"/>
    </source>
</evidence>
<evidence type="ECO:0000250" key="2">
    <source>
        <dbReference type="UniProtKB" id="O83774"/>
    </source>
</evidence>
<evidence type="ECO:0000250" key="3">
    <source>
        <dbReference type="UniProtKB" id="P0AB85"/>
    </source>
</evidence>
<evidence type="ECO:0000255" key="4">
    <source>
        <dbReference type="PROSITE-ProRule" id="PRU00303"/>
    </source>
</evidence>
<evidence type="ECO:0000269" key="5">
    <source>
    </source>
</evidence>
<evidence type="ECO:0000269" key="6">
    <source>
    </source>
</evidence>
<evidence type="ECO:0000269" key="7">
    <source>
    </source>
</evidence>
<evidence type="ECO:0000269" key="8">
    <source>
    </source>
</evidence>
<evidence type="ECO:0000303" key="9">
    <source>
    </source>
</evidence>
<evidence type="ECO:0000303" key="10">
    <source>
    </source>
</evidence>
<evidence type="ECO:0000303" key="11">
    <source>
    </source>
</evidence>
<evidence type="ECO:0000305" key="12"/>
<evidence type="ECO:0007829" key="13">
    <source>
        <dbReference type="PDB" id="3PND"/>
    </source>
</evidence>
<name>APBE_SALTY</name>
<gene>
    <name evidence="11" type="primary">apbE</name>
    <name type="ordered locus">STM2266</name>
</gene>
<proteinExistence type="evidence at protein level"/>
<feature type="signal peptide" evidence="4">
    <location>
        <begin position="1"/>
        <end position="19"/>
    </location>
</feature>
<feature type="chain" id="PRO_0000001750" description="FAD:protein FMN transferase">
    <location>
        <begin position="20"/>
        <end position="350"/>
    </location>
</feature>
<feature type="binding site" evidence="7">
    <location>
        <position position="41"/>
    </location>
    <ligand>
        <name>FAD</name>
        <dbReference type="ChEBI" id="CHEBI:57692"/>
    </ligand>
</feature>
<feature type="binding site" evidence="7">
    <location>
        <position position="78"/>
    </location>
    <ligand>
        <name>FAD</name>
        <dbReference type="ChEBI" id="CHEBI:57692"/>
    </ligand>
</feature>
<feature type="binding site" evidence="7">
    <location>
        <begin position="119"/>
        <end position="121"/>
    </location>
    <ligand>
        <name>FAD</name>
        <dbReference type="ChEBI" id="CHEBI:57692"/>
    </ligand>
</feature>
<feature type="binding site" evidence="7">
    <location>
        <position position="181"/>
    </location>
    <ligand>
        <name>FAD</name>
        <dbReference type="ChEBI" id="CHEBI:57692"/>
    </ligand>
</feature>
<feature type="binding site" evidence="3">
    <location>
        <position position="184"/>
    </location>
    <ligand>
        <name>Mg(2+)</name>
        <dbReference type="ChEBI" id="CHEBI:18420"/>
    </ligand>
</feature>
<feature type="binding site" evidence="7">
    <location>
        <position position="187"/>
    </location>
    <ligand>
        <name>FAD</name>
        <dbReference type="ChEBI" id="CHEBI:57692"/>
    </ligand>
</feature>
<feature type="binding site" evidence="7">
    <location>
        <position position="272"/>
    </location>
    <ligand>
        <name>FAD</name>
        <dbReference type="ChEBI" id="CHEBI:57692"/>
    </ligand>
</feature>
<feature type="binding site" evidence="2">
    <location>
        <position position="298"/>
    </location>
    <ligand>
        <name>Mg(2+)</name>
        <dbReference type="ChEBI" id="CHEBI:18420"/>
    </ligand>
</feature>
<feature type="binding site" evidence="3">
    <location>
        <position position="301"/>
    </location>
    <ligand>
        <name>Mg(2+)</name>
        <dbReference type="ChEBI" id="CHEBI:18420"/>
    </ligand>
</feature>
<feature type="binding site" evidence="2">
    <location>
        <position position="302"/>
    </location>
    <ligand>
        <name>Mg(2+)</name>
        <dbReference type="ChEBI" id="CHEBI:18420"/>
    </ligand>
</feature>
<feature type="lipid moiety-binding region" description="N-palmitoyl cysteine" evidence="4">
    <location>
        <position position="20"/>
    </location>
</feature>
<feature type="lipid moiety-binding region" description="S-diacylglycerol cysteine" evidence="4">
    <location>
        <position position="20"/>
    </location>
</feature>
<feature type="mutagenesis site" description="Unable to grow in minimal glucose medium; requires thiamine for growth. Is defective in FAD binding." evidence="7">
    <original>Y</original>
    <variation>A</variation>
    <location>
        <position position="78"/>
    </location>
</feature>
<feature type="sequence conflict" description="In Ref. 2; AAB50407." evidence="12" ref="2">
    <original>S</original>
    <variation>N</variation>
    <location>
        <position position="215"/>
    </location>
</feature>
<feature type="sequence conflict" description="In Ref. 2; AAB50407." evidence="12" ref="2">
    <original>LAVFMIMKEGEGFKTWMSPQFKTFLVSDKN</original>
    <variation>WRYL</variation>
    <location>
        <begin position="321"/>
        <end position="350"/>
    </location>
</feature>
<feature type="strand" evidence="13">
    <location>
        <begin position="34"/>
        <end position="40"/>
    </location>
</feature>
<feature type="strand" evidence="13">
    <location>
        <begin position="43"/>
        <end position="52"/>
    </location>
</feature>
<feature type="helix" evidence="13">
    <location>
        <begin position="54"/>
        <end position="75"/>
    </location>
</feature>
<feature type="helix" evidence="13">
    <location>
        <begin position="83"/>
        <end position="88"/>
    </location>
</feature>
<feature type="strand" evidence="13">
    <location>
        <begin position="96"/>
        <end position="98"/>
    </location>
</feature>
<feature type="helix" evidence="13">
    <location>
        <begin position="100"/>
        <end position="115"/>
    </location>
</feature>
<feature type="turn" evidence="13">
    <location>
        <begin position="116"/>
        <end position="118"/>
    </location>
</feature>
<feature type="helix" evidence="13">
    <location>
        <begin position="125"/>
        <end position="130"/>
    </location>
</feature>
<feature type="strand" evidence="13">
    <location>
        <begin position="134"/>
        <end position="136"/>
    </location>
</feature>
<feature type="helix" evidence="13">
    <location>
        <begin position="145"/>
        <end position="152"/>
    </location>
</feature>
<feature type="helix" evidence="13">
    <location>
        <begin position="157"/>
        <end position="159"/>
    </location>
</feature>
<feature type="strand" evidence="13">
    <location>
        <begin position="160"/>
        <end position="165"/>
    </location>
</feature>
<feature type="strand" evidence="13">
    <location>
        <begin position="168"/>
        <end position="174"/>
    </location>
</feature>
<feature type="helix" evidence="13">
    <location>
        <begin position="183"/>
        <end position="200"/>
    </location>
</feature>
<feature type="strand" evidence="13">
    <location>
        <begin position="205"/>
        <end position="210"/>
    </location>
</feature>
<feature type="strand" evidence="13">
    <location>
        <begin position="213"/>
        <end position="219"/>
    </location>
</feature>
<feature type="strand" evidence="13">
    <location>
        <begin position="223"/>
        <end position="225"/>
    </location>
</feature>
<feature type="strand" evidence="13">
    <location>
        <begin position="228"/>
        <end position="231"/>
    </location>
</feature>
<feature type="strand" evidence="13">
    <location>
        <begin position="241"/>
        <end position="244"/>
    </location>
</feature>
<feature type="strand" evidence="13">
    <location>
        <begin position="249"/>
        <end position="255"/>
    </location>
</feature>
<feature type="helix" evidence="13">
    <location>
        <begin position="257"/>
        <end position="263"/>
    </location>
</feature>
<feature type="turn" evidence="13">
    <location>
        <begin position="274"/>
        <end position="277"/>
    </location>
</feature>
<feature type="strand" evidence="13">
    <location>
        <begin position="283"/>
        <end position="293"/>
    </location>
</feature>
<feature type="helix" evidence="13">
    <location>
        <begin position="294"/>
        <end position="307"/>
    </location>
</feature>
<feature type="helix" evidence="13">
    <location>
        <begin position="309"/>
        <end position="319"/>
    </location>
</feature>
<feature type="strand" evidence="13">
    <location>
        <begin position="322"/>
        <end position="329"/>
    </location>
</feature>
<feature type="strand" evidence="13">
    <location>
        <begin position="332"/>
        <end position="337"/>
    </location>
</feature>
<feature type="helix" evidence="13">
    <location>
        <begin position="339"/>
        <end position="342"/>
    </location>
</feature>
<protein>
    <recommendedName>
        <fullName evidence="1">FAD:protein FMN transferase</fullName>
        <ecNumber evidence="1">2.7.1.180</ecNumber>
    </recommendedName>
    <alternativeName>
        <fullName evidence="1">Flavin transferase</fullName>
    </alternativeName>
</protein>
<keyword id="KW-0002">3D-structure</keyword>
<keyword id="KW-0997">Cell inner membrane</keyword>
<keyword id="KW-1003">Cell membrane</keyword>
<keyword id="KW-0274">FAD</keyword>
<keyword id="KW-0285">Flavoprotein</keyword>
<keyword id="KW-0449">Lipoprotein</keyword>
<keyword id="KW-0460">Magnesium</keyword>
<keyword id="KW-0472">Membrane</keyword>
<keyword id="KW-0479">Metal-binding</keyword>
<keyword id="KW-0564">Palmitate</keyword>
<keyword id="KW-1185">Reference proteome</keyword>
<keyword id="KW-0732">Signal</keyword>
<keyword id="KW-0808">Transferase</keyword>
<organism>
    <name type="scientific">Salmonella typhimurium (strain LT2 / SGSC1412 / ATCC 700720)</name>
    <dbReference type="NCBI Taxonomy" id="99287"/>
    <lineage>
        <taxon>Bacteria</taxon>
        <taxon>Pseudomonadati</taxon>
        <taxon>Pseudomonadota</taxon>
        <taxon>Gammaproteobacteria</taxon>
        <taxon>Enterobacterales</taxon>
        <taxon>Enterobacteriaceae</taxon>
        <taxon>Salmonella</taxon>
    </lineage>
</organism>
<sequence>MKMTFCRAVCLAAAFLLMGCDEAPETTTASPAAQVLEGKTMGTLWRVSVVGIDAKRAAELQTKIQTQLDADDWLLSTYKNDSALMRFNHSRSLAPWPVSEAMADIVTSALRIGAKTDGAMDITVGPLVNLWGFGPDRQPLHIPTPAQIDAAKAKTGLQHLQVIDRAGHQFLQKDLPDLYVDLSTVGEGYAADHLARLMEQEGIARYLVSVGGALSSRGMNAQGQPWRVAIQKPTDRENAVQAIVDINGHGISTSGSYRNYYELDGKRVSHVIDPQTGRPIEHNLVSVTVIAPTALEADGWDTGLMVLGTQKAQEVVRREGLAVFMIMKEGEGFKTWMSPQFKTFLVSDKN</sequence>
<comment type="function">
    <text evidence="1">Flavin transferase that catalyzes the transfer of the FMN moiety of FAD and its covalent binding to the hydroxyl group of a threonine residue in a target flavoprotein such as NqrB and NqrC, two subunits of the NQR complex.</text>
</comment>
<comment type="catalytic activity">
    <reaction evidence="1">
        <text>L-threonyl-[protein] + FAD = FMN-L-threonyl-[protein] + AMP + H(+)</text>
        <dbReference type="Rhea" id="RHEA:36847"/>
        <dbReference type="Rhea" id="RHEA-COMP:11060"/>
        <dbReference type="Rhea" id="RHEA-COMP:11061"/>
        <dbReference type="ChEBI" id="CHEBI:15378"/>
        <dbReference type="ChEBI" id="CHEBI:30013"/>
        <dbReference type="ChEBI" id="CHEBI:57692"/>
        <dbReference type="ChEBI" id="CHEBI:74257"/>
        <dbReference type="ChEBI" id="CHEBI:456215"/>
        <dbReference type="EC" id="2.7.1.180"/>
    </reaction>
</comment>
<comment type="cofactor">
    <cofactor evidence="1">
        <name>Mg(2+)</name>
        <dbReference type="ChEBI" id="CHEBI:18420"/>
    </cofactor>
</comment>
<comment type="subunit">
    <text evidence="7">Homodimer.</text>
</comment>
<comment type="subcellular location">
    <subcellularLocation>
        <location evidence="4 5 8">Cell inner membrane</location>
        <topology evidence="4 8">Lipid-anchor</topology>
        <orientation evidence="5">Periplasmic side</orientation>
    </subcellularLocation>
</comment>
<comment type="disruption phenotype">
    <text evidence="6 8">Cells lacking this gene are conditional thiamine auxotrophs, and display phenotypic behaviors similar to those of strains lacking isc (iron-sulfur [Fe-S] cluster biosynthesis) operon functions.</text>
</comment>
<comment type="similarity">
    <text evidence="12">Belongs to the ApbE family.</text>
</comment>
<comment type="caution">
    <text evidence="9 10 11">Was originally thought to be involved in synthesis of the pyrimidine moiety of thiamine and/or in metabolism of Fe-S clusters.</text>
</comment>
<dbReference type="EC" id="2.7.1.180" evidence="1"/>
<dbReference type="EMBL" id="AF035376">
    <property type="protein sequence ID" value="AAC46116.1"/>
    <property type="molecule type" value="Genomic_DNA"/>
</dbReference>
<dbReference type="EMBL" id="U90324">
    <property type="protein sequence ID" value="AAB50407.1"/>
    <property type="molecule type" value="Genomic_DNA"/>
</dbReference>
<dbReference type="EMBL" id="AE006468">
    <property type="protein sequence ID" value="AAL21168.1"/>
    <property type="molecule type" value="Genomic_DNA"/>
</dbReference>
<dbReference type="EMBL" id="D90221">
    <property type="status" value="NOT_ANNOTATED_CDS"/>
    <property type="molecule type" value="Genomic_DNA"/>
</dbReference>
<dbReference type="RefSeq" id="NP_461209.1">
    <property type="nucleotide sequence ID" value="NC_003197.2"/>
</dbReference>
<dbReference type="RefSeq" id="WP_000784307.1">
    <property type="nucleotide sequence ID" value="NC_003197.2"/>
</dbReference>
<dbReference type="PDB" id="3PND">
    <property type="method" value="X-ray"/>
    <property type="resolution" value="2.75 A"/>
    <property type="chains" value="A/B/C/D=21-350"/>
</dbReference>
<dbReference type="PDBsum" id="3PND"/>
<dbReference type="SMR" id="P41780"/>
<dbReference type="STRING" id="99287.STM2266"/>
<dbReference type="PaxDb" id="99287-STM2266"/>
<dbReference type="DNASU" id="1253788"/>
<dbReference type="GeneID" id="1253788"/>
<dbReference type="KEGG" id="stm:STM2266"/>
<dbReference type="PATRIC" id="fig|99287.12.peg.2400"/>
<dbReference type="HOGENOM" id="CLU_044403_0_0_6"/>
<dbReference type="OMA" id="RADHHIF"/>
<dbReference type="PhylomeDB" id="P41780"/>
<dbReference type="BioCyc" id="SENT99287:STM2266-MONOMER"/>
<dbReference type="EvolutionaryTrace" id="P41780"/>
<dbReference type="Proteomes" id="UP000001014">
    <property type="component" value="Chromosome"/>
</dbReference>
<dbReference type="GO" id="GO:0005886">
    <property type="term" value="C:plasma membrane"/>
    <property type="evidence" value="ECO:0007669"/>
    <property type="project" value="UniProtKB-SubCell"/>
</dbReference>
<dbReference type="GO" id="GO:0046872">
    <property type="term" value="F:metal ion binding"/>
    <property type="evidence" value="ECO:0007669"/>
    <property type="project" value="UniProtKB-KW"/>
</dbReference>
<dbReference type="GO" id="GO:0016740">
    <property type="term" value="F:transferase activity"/>
    <property type="evidence" value="ECO:0000318"/>
    <property type="project" value="GO_Central"/>
</dbReference>
<dbReference type="DisProt" id="DP02667"/>
<dbReference type="FunFam" id="3.10.520.10:FF:000001">
    <property type="entry name" value="FAD:protein FMN transferase"/>
    <property type="match status" value="1"/>
</dbReference>
<dbReference type="Gene3D" id="3.10.520.10">
    <property type="entry name" value="ApbE-like domains"/>
    <property type="match status" value="1"/>
</dbReference>
<dbReference type="InterPro" id="IPR024932">
    <property type="entry name" value="ApbE"/>
</dbReference>
<dbReference type="InterPro" id="IPR003374">
    <property type="entry name" value="ApbE-like_sf"/>
</dbReference>
<dbReference type="NCBIfam" id="NF007774">
    <property type="entry name" value="PRK10461.1"/>
    <property type="match status" value="1"/>
</dbReference>
<dbReference type="PANTHER" id="PTHR30040:SF2">
    <property type="entry name" value="FAD:PROTEIN FMN TRANSFERASE"/>
    <property type="match status" value="1"/>
</dbReference>
<dbReference type="PANTHER" id="PTHR30040">
    <property type="entry name" value="THIAMINE BIOSYNTHESIS LIPOPROTEIN APBE"/>
    <property type="match status" value="1"/>
</dbReference>
<dbReference type="Pfam" id="PF02424">
    <property type="entry name" value="ApbE"/>
    <property type="match status" value="1"/>
</dbReference>
<dbReference type="PIRSF" id="PIRSF006268">
    <property type="entry name" value="ApbE"/>
    <property type="match status" value="1"/>
</dbReference>
<dbReference type="SUPFAM" id="SSF143631">
    <property type="entry name" value="ApbE-like"/>
    <property type="match status" value="1"/>
</dbReference>
<dbReference type="PROSITE" id="PS51257">
    <property type="entry name" value="PROKAR_LIPOPROTEIN"/>
    <property type="match status" value="1"/>
</dbReference>